<sequence>MNALLLLAALSSQITFNTTQQGDMYTIIPEVTLTQSCLCRVQILSLREGSSGQSQTKQEKTLSLPANQPIALTKLSLNISPDDRVKIVVTVSDGQSLHLSQQWPPSSEKS</sequence>
<name>CSGC_ECO45</name>
<reference key="1">
    <citation type="journal article" date="2009" name="PLoS Genet.">
        <title>Organised genome dynamics in the Escherichia coli species results in highly diverse adaptive paths.</title>
        <authorList>
            <person name="Touchon M."/>
            <person name="Hoede C."/>
            <person name="Tenaillon O."/>
            <person name="Barbe V."/>
            <person name="Baeriswyl S."/>
            <person name="Bidet P."/>
            <person name="Bingen E."/>
            <person name="Bonacorsi S."/>
            <person name="Bouchier C."/>
            <person name="Bouvet O."/>
            <person name="Calteau A."/>
            <person name="Chiapello H."/>
            <person name="Clermont O."/>
            <person name="Cruveiller S."/>
            <person name="Danchin A."/>
            <person name="Diard M."/>
            <person name="Dossat C."/>
            <person name="Karoui M.E."/>
            <person name="Frapy E."/>
            <person name="Garry L."/>
            <person name="Ghigo J.M."/>
            <person name="Gilles A.M."/>
            <person name="Johnson J."/>
            <person name="Le Bouguenec C."/>
            <person name="Lescat M."/>
            <person name="Mangenot S."/>
            <person name="Martinez-Jehanne V."/>
            <person name="Matic I."/>
            <person name="Nassif X."/>
            <person name="Oztas S."/>
            <person name="Petit M.A."/>
            <person name="Pichon C."/>
            <person name="Rouy Z."/>
            <person name="Ruf C.S."/>
            <person name="Schneider D."/>
            <person name="Tourret J."/>
            <person name="Vacherie B."/>
            <person name="Vallenet D."/>
            <person name="Medigue C."/>
            <person name="Rocha E.P.C."/>
            <person name="Denamur E."/>
        </authorList>
    </citation>
    <scope>NUCLEOTIDE SEQUENCE [LARGE SCALE GENOMIC DNA]</scope>
    <source>
        <strain>S88 / ExPEC</strain>
    </source>
</reference>
<comment type="function">
    <text evidence="1">Plays a role in the extracellular assembly of CsgA into thin aggregative fimbriae (Tafi) fibers. Assembly may also require CsgE. Tafi are thought to be assembled via an extracellular nucleation-precipitation (ENP) pathway, and possibly also via an intracellular non-CsgC-dependent pathway (By similarity).</text>
</comment>
<comment type="subcellular location">
    <subcellularLocation>
        <location evidence="1">Periplasm</location>
    </subcellularLocation>
</comment>
<comment type="similarity">
    <text evidence="3">Belongs to the CsgC/AgfC family.</text>
</comment>
<comment type="sequence caution" evidence="3">
    <conflict type="erroneous initiation">
        <sequence resource="EMBL-CDS" id="CAR02383"/>
    </conflict>
</comment>
<organism>
    <name type="scientific">Escherichia coli O45:K1 (strain S88 / ExPEC)</name>
    <dbReference type="NCBI Taxonomy" id="585035"/>
    <lineage>
        <taxon>Bacteria</taxon>
        <taxon>Pseudomonadati</taxon>
        <taxon>Pseudomonadota</taxon>
        <taxon>Gammaproteobacteria</taxon>
        <taxon>Enterobacterales</taxon>
        <taxon>Enterobacteriaceae</taxon>
        <taxon>Escherichia</taxon>
    </lineage>
</organism>
<gene>
    <name type="primary">csgC</name>
    <name type="ordered locus">ECS88_1055</name>
</gene>
<protein>
    <recommendedName>
        <fullName>Curli assembly protein CsgC</fullName>
    </recommendedName>
</protein>
<feature type="signal peptide" evidence="2">
    <location>
        <begin position="1"/>
        <end position="8"/>
    </location>
</feature>
<feature type="chain" id="PRO_0000391679" description="Curli assembly protein CsgC">
    <location>
        <begin position="9"/>
        <end position="110"/>
    </location>
</feature>
<dbReference type="EMBL" id="CU928161">
    <property type="protein sequence ID" value="CAR02383.2"/>
    <property type="status" value="ALT_INIT"/>
    <property type="molecule type" value="Genomic_DNA"/>
</dbReference>
<dbReference type="RefSeq" id="WP_000992818.1">
    <property type="nucleotide sequence ID" value="NC_011742.1"/>
</dbReference>
<dbReference type="SMR" id="B7MII3"/>
<dbReference type="GeneID" id="75171169"/>
<dbReference type="KEGG" id="ecz:ECS88_1055"/>
<dbReference type="HOGENOM" id="CLU_152585_0_0_6"/>
<dbReference type="Proteomes" id="UP000000747">
    <property type="component" value="Chromosome"/>
</dbReference>
<dbReference type="GO" id="GO:0042597">
    <property type="term" value="C:periplasmic space"/>
    <property type="evidence" value="ECO:0007669"/>
    <property type="project" value="UniProtKB-SubCell"/>
</dbReference>
<dbReference type="Gene3D" id="2.60.40.2420">
    <property type="match status" value="1"/>
</dbReference>
<dbReference type="InterPro" id="IPR053722">
    <property type="entry name" value="Curli_assembly_CsgC/AgfC"/>
</dbReference>
<dbReference type="InterPro" id="IPR014491">
    <property type="entry name" value="Curli_production_prot_CsgC"/>
</dbReference>
<dbReference type="NCBIfam" id="NF007507">
    <property type="entry name" value="PRK10102.1"/>
    <property type="match status" value="1"/>
</dbReference>
<dbReference type="Pfam" id="PF10610">
    <property type="entry name" value="Tafi-CsgC"/>
    <property type="match status" value="1"/>
</dbReference>
<dbReference type="PIRSF" id="PIRSF018100">
    <property type="entry name" value="CsgC"/>
    <property type="match status" value="1"/>
</dbReference>
<evidence type="ECO:0000250" key="1"/>
<evidence type="ECO:0000255" key="2"/>
<evidence type="ECO:0000305" key="3"/>
<proteinExistence type="inferred from homology"/>
<accession>B7MII3</accession>
<keyword id="KW-0143">Chaperone</keyword>
<keyword id="KW-0574">Periplasm</keyword>
<keyword id="KW-1185">Reference proteome</keyword>
<keyword id="KW-0732">Signal</keyword>